<reference key="1">
    <citation type="journal article" date="2002" name="Proc. Natl. Acad. Sci. U.S.A.">
        <title>Extensive mosaic structure revealed by the complete genome sequence of uropathogenic Escherichia coli.</title>
        <authorList>
            <person name="Welch R.A."/>
            <person name="Burland V."/>
            <person name="Plunkett G. III"/>
            <person name="Redford P."/>
            <person name="Roesch P."/>
            <person name="Rasko D."/>
            <person name="Buckles E.L."/>
            <person name="Liou S.-R."/>
            <person name="Boutin A."/>
            <person name="Hackett J."/>
            <person name="Stroud D."/>
            <person name="Mayhew G.F."/>
            <person name="Rose D.J."/>
            <person name="Zhou S."/>
            <person name="Schwartz D.C."/>
            <person name="Perna N.T."/>
            <person name="Mobley H.L.T."/>
            <person name="Donnenberg M.S."/>
            <person name="Blattner F.R."/>
        </authorList>
    </citation>
    <scope>NUCLEOTIDE SEQUENCE [LARGE SCALE GENOMIC DNA]</scope>
    <source>
        <strain>CFT073 / ATCC 700928 / UPEC</strain>
    </source>
</reference>
<feature type="chain" id="PRO_0000087223" description="Fe(2+) transport protein A">
    <location>
        <begin position="1"/>
        <end position="75"/>
    </location>
</feature>
<proteinExistence type="inferred from homology"/>
<organism>
    <name type="scientific">Escherichia coli O6:H1 (strain CFT073 / ATCC 700928 / UPEC)</name>
    <dbReference type="NCBI Taxonomy" id="199310"/>
    <lineage>
        <taxon>Bacteria</taxon>
        <taxon>Pseudomonadati</taxon>
        <taxon>Pseudomonadota</taxon>
        <taxon>Gammaproteobacteria</taxon>
        <taxon>Enterobacterales</taxon>
        <taxon>Enterobacteriaceae</taxon>
        <taxon>Escherichia</taxon>
    </lineage>
</organism>
<evidence type="ECO:0000250" key="1">
    <source>
        <dbReference type="UniProtKB" id="P0AEL3"/>
    </source>
</evidence>
<evidence type="ECO:0000305" key="2"/>
<accession>P0AEL4</accession>
<accession>P33649</accession>
<dbReference type="EMBL" id="AE014075">
    <property type="protein sequence ID" value="AAN82623.1"/>
    <property type="molecule type" value="Genomic_DNA"/>
</dbReference>
<dbReference type="RefSeq" id="WP_001200455.1">
    <property type="nucleotide sequence ID" value="NZ_CP051263.1"/>
</dbReference>
<dbReference type="BMRB" id="P0AEL4"/>
<dbReference type="SMR" id="P0AEL4"/>
<dbReference type="STRING" id="199310.c4185"/>
<dbReference type="GeneID" id="93778590"/>
<dbReference type="KEGG" id="ecc:c4185"/>
<dbReference type="eggNOG" id="COG1918">
    <property type="taxonomic scope" value="Bacteria"/>
</dbReference>
<dbReference type="HOGENOM" id="CLU_150646_13_0_6"/>
<dbReference type="BioCyc" id="ECOL199310:C4185-MONOMER"/>
<dbReference type="Proteomes" id="UP000001410">
    <property type="component" value="Chromosome"/>
</dbReference>
<dbReference type="GO" id="GO:0046914">
    <property type="term" value="F:transition metal ion binding"/>
    <property type="evidence" value="ECO:0007669"/>
    <property type="project" value="InterPro"/>
</dbReference>
<dbReference type="GO" id="GO:0006826">
    <property type="term" value="P:iron ion transport"/>
    <property type="evidence" value="ECO:0007669"/>
    <property type="project" value="UniProtKB-KW"/>
</dbReference>
<dbReference type="FunFam" id="2.30.30.90:FF:000001">
    <property type="entry name" value="Ferrous iron transporter A"/>
    <property type="match status" value="1"/>
</dbReference>
<dbReference type="Gene3D" id="2.30.30.90">
    <property type="match status" value="1"/>
</dbReference>
<dbReference type="InterPro" id="IPR007167">
    <property type="entry name" value="Fe-transptr_FeoA-like"/>
</dbReference>
<dbReference type="InterPro" id="IPR052713">
    <property type="entry name" value="FeoA"/>
</dbReference>
<dbReference type="InterPro" id="IPR038157">
    <property type="entry name" value="FeoA_core_dom"/>
</dbReference>
<dbReference type="InterPro" id="IPR008988">
    <property type="entry name" value="Transcriptional_repressor_C"/>
</dbReference>
<dbReference type="NCBIfam" id="NF007106">
    <property type="entry name" value="PRK09555.1"/>
    <property type="match status" value="1"/>
</dbReference>
<dbReference type="PANTHER" id="PTHR42954">
    <property type="entry name" value="FE(2+) TRANSPORT PROTEIN A"/>
    <property type="match status" value="1"/>
</dbReference>
<dbReference type="PANTHER" id="PTHR42954:SF2">
    <property type="entry name" value="FE(2+) TRANSPORT PROTEIN A"/>
    <property type="match status" value="1"/>
</dbReference>
<dbReference type="Pfam" id="PF04023">
    <property type="entry name" value="FeoA"/>
    <property type="match status" value="1"/>
</dbReference>
<dbReference type="SMART" id="SM00899">
    <property type="entry name" value="FeoA"/>
    <property type="match status" value="1"/>
</dbReference>
<dbReference type="SUPFAM" id="SSF50037">
    <property type="entry name" value="C-terminal domain of transcriptional repressors"/>
    <property type="match status" value="1"/>
</dbReference>
<name>FEOA_ECOL6</name>
<keyword id="KW-0406">Ion transport</keyword>
<keyword id="KW-0408">Iron</keyword>
<keyword id="KW-0410">Iron transport</keyword>
<keyword id="KW-1185">Reference proteome</keyword>
<keyword id="KW-0813">Transport</keyword>
<comment type="function">
    <text evidence="1">Involved in Fe(2+) ion uptake (By similarity).</text>
</comment>
<comment type="similarity">
    <text evidence="2">Belongs to the FeoA family.</text>
</comment>
<gene>
    <name type="primary">feoA</name>
    <name type="ordered locus">c4185</name>
</gene>
<sequence length="75" mass="8371">MQYTPDTAWKITGFSREISPAYRQKLLSLGMLPGSSFNVVRVAPLGDPIHIETRRVSLVLRKKDLALLEVEAVSC</sequence>
<protein>
    <recommendedName>
        <fullName evidence="2">Fe(2+) transport protein A</fullName>
    </recommendedName>
    <alternativeName>
        <fullName>Ferrous iron transport protein A</fullName>
    </alternativeName>
</protein>